<organism>
    <name type="scientific">Chelativorans sp. (strain BNC1)</name>
    <dbReference type="NCBI Taxonomy" id="266779"/>
    <lineage>
        <taxon>Bacteria</taxon>
        <taxon>Pseudomonadati</taxon>
        <taxon>Pseudomonadota</taxon>
        <taxon>Alphaproteobacteria</taxon>
        <taxon>Hyphomicrobiales</taxon>
        <taxon>Phyllobacteriaceae</taxon>
        <taxon>Chelativorans</taxon>
    </lineage>
</organism>
<sequence length="293" mass="31303">MFRGSITALVTPFRQDGSLDKKAFGALVEWQIAEGSSGLVPVGTTGESPTLTHDEHQEVIRLCVEAANKRVPVIAGAGSNSTREAISFAEHAEKVGADALLVVTPYYNKPNQRGLYEHFAAIARSTSLPIFIYNIPPRSVVDMLPETMARLAADFKNIVGVKDATAKLDRVSEQREACGPDFIQLSGEDATALGFNAHGGVGCISVTANVAPRLCAEFQAASLRGDGARAIELQDRLFPLHKALFLEPNPAGAKYALSRLGRLENVLRSPLVTVEASTAEKIDAAMKHAGLLN</sequence>
<gene>
    <name evidence="1" type="primary">dapA</name>
    <name type="ordered locus">Meso_0941</name>
</gene>
<reference key="1">
    <citation type="submission" date="2006-06" db="EMBL/GenBank/DDBJ databases">
        <title>Complete sequence of chromosome of Mesorhizobium sp. BNC1.</title>
        <authorList>
            <consortium name="US DOE Joint Genome Institute"/>
            <person name="Copeland A."/>
            <person name="Lucas S."/>
            <person name="Lapidus A."/>
            <person name="Barry K."/>
            <person name="Detter J.C."/>
            <person name="Glavina del Rio T."/>
            <person name="Hammon N."/>
            <person name="Israni S."/>
            <person name="Dalin E."/>
            <person name="Tice H."/>
            <person name="Pitluck S."/>
            <person name="Chertkov O."/>
            <person name="Brettin T."/>
            <person name="Bruce D."/>
            <person name="Han C."/>
            <person name="Tapia R."/>
            <person name="Gilna P."/>
            <person name="Schmutz J."/>
            <person name="Larimer F."/>
            <person name="Land M."/>
            <person name="Hauser L."/>
            <person name="Kyrpides N."/>
            <person name="Mikhailova N."/>
            <person name="Richardson P."/>
        </authorList>
    </citation>
    <scope>NUCLEOTIDE SEQUENCE [LARGE SCALE GENOMIC DNA]</scope>
    <source>
        <strain>BNC1</strain>
    </source>
</reference>
<keyword id="KW-0028">Amino-acid biosynthesis</keyword>
<keyword id="KW-0963">Cytoplasm</keyword>
<keyword id="KW-0220">Diaminopimelate biosynthesis</keyword>
<keyword id="KW-0456">Lyase</keyword>
<keyword id="KW-0457">Lysine biosynthesis</keyword>
<keyword id="KW-0704">Schiff base</keyword>
<protein>
    <recommendedName>
        <fullName evidence="1">4-hydroxy-tetrahydrodipicolinate synthase</fullName>
        <shortName evidence="1">HTPA synthase</shortName>
        <ecNumber evidence="1">4.3.3.7</ecNumber>
    </recommendedName>
</protein>
<name>DAPA_CHESB</name>
<accession>Q11JT7</accession>
<evidence type="ECO:0000255" key="1">
    <source>
        <dbReference type="HAMAP-Rule" id="MF_00418"/>
    </source>
</evidence>
<evidence type="ECO:0000305" key="2"/>
<comment type="function">
    <text evidence="1">Catalyzes the condensation of (S)-aspartate-beta-semialdehyde [(S)-ASA] and pyruvate to 4-hydroxy-tetrahydrodipicolinate (HTPA).</text>
</comment>
<comment type="catalytic activity">
    <reaction evidence="1">
        <text>L-aspartate 4-semialdehyde + pyruvate = (2S,4S)-4-hydroxy-2,3,4,5-tetrahydrodipicolinate + H2O + H(+)</text>
        <dbReference type="Rhea" id="RHEA:34171"/>
        <dbReference type="ChEBI" id="CHEBI:15361"/>
        <dbReference type="ChEBI" id="CHEBI:15377"/>
        <dbReference type="ChEBI" id="CHEBI:15378"/>
        <dbReference type="ChEBI" id="CHEBI:67139"/>
        <dbReference type="ChEBI" id="CHEBI:537519"/>
        <dbReference type="EC" id="4.3.3.7"/>
    </reaction>
</comment>
<comment type="pathway">
    <text evidence="1">Amino-acid biosynthesis; L-lysine biosynthesis via DAP pathway; (S)-tetrahydrodipicolinate from L-aspartate: step 3/4.</text>
</comment>
<comment type="subunit">
    <text evidence="1">Homotetramer; dimer of dimers.</text>
</comment>
<comment type="subcellular location">
    <subcellularLocation>
        <location evidence="1">Cytoplasm</location>
    </subcellularLocation>
</comment>
<comment type="similarity">
    <text evidence="1">Belongs to the DapA family.</text>
</comment>
<comment type="caution">
    <text evidence="2">Was originally thought to be a dihydrodipicolinate synthase (DHDPS), catalyzing the condensation of (S)-aspartate-beta-semialdehyde [(S)-ASA] and pyruvate to dihydrodipicolinate (DHDP). However, it was shown in E.coli that the product of the enzymatic reaction is not dihydrodipicolinate but in fact (4S)-4-hydroxy-2,3,4,5-tetrahydro-(2S)-dipicolinic acid (HTPA), and that the consecutive dehydration reaction leading to DHDP is not spontaneous but catalyzed by DapB.</text>
</comment>
<dbReference type="EC" id="4.3.3.7" evidence="1"/>
<dbReference type="EMBL" id="CP000390">
    <property type="protein sequence ID" value="ABG62338.1"/>
    <property type="molecule type" value="Genomic_DNA"/>
</dbReference>
<dbReference type="SMR" id="Q11JT7"/>
<dbReference type="STRING" id="266779.Meso_0941"/>
<dbReference type="KEGG" id="mes:Meso_0941"/>
<dbReference type="eggNOG" id="COG0329">
    <property type="taxonomic scope" value="Bacteria"/>
</dbReference>
<dbReference type="HOGENOM" id="CLU_049343_7_1_5"/>
<dbReference type="OrthoDB" id="9782828at2"/>
<dbReference type="UniPathway" id="UPA00034">
    <property type="reaction ID" value="UER00017"/>
</dbReference>
<dbReference type="GO" id="GO:0005829">
    <property type="term" value="C:cytosol"/>
    <property type="evidence" value="ECO:0007669"/>
    <property type="project" value="TreeGrafter"/>
</dbReference>
<dbReference type="GO" id="GO:0008840">
    <property type="term" value="F:4-hydroxy-tetrahydrodipicolinate synthase activity"/>
    <property type="evidence" value="ECO:0007669"/>
    <property type="project" value="UniProtKB-UniRule"/>
</dbReference>
<dbReference type="GO" id="GO:0019877">
    <property type="term" value="P:diaminopimelate biosynthetic process"/>
    <property type="evidence" value="ECO:0007669"/>
    <property type="project" value="UniProtKB-UniRule"/>
</dbReference>
<dbReference type="GO" id="GO:0009089">
    <property type="term" value="P:lysine biosynthetic process via diaminopimelate"/>
    <property type="evidence" value="ECO:0007669"/>
    <property type="project" value="UniProtKB-UniRule"/>
</dbReference>
<dbReference type="CDD" id="cd00950">
    <property type="entry name" value="DHDPS"/>
    <property type="match status" value="1"/>
</dbReference>
<dbReference type="Gene3D" id="3.20.20.70">
    <property type="entry name" value="Aldolase class I"/>
    <property type="match status" value="1"/>
</dbReference>
<dbReference type="HAMAP" id="MF_00418">
    <property type="entry name" value="DapA"/>
    <property type="match status" value="1"/>
</dbReference>
<dbReference type="InterPro" id="IPR013785">
    <property type="entry name" value="Aldolase_TIM"/>
</dbReference>
<dbReference type="InterPro" id="IPR005263">
    <property type="entry name" value="DapA"/>
</dbReference>
<dbReference type="InterPro" id="IPR002220">
    <property type="entry name" value="DapA-like"/>
</dbReference>
<dbReference type="InterPro" id="IPR020625">
    <property type="entry name" value="Schiff_base-form_aldolases_AS"/>
</dbReference>
<dbReference type="InterPro" id="IPR020624">
    <property type="entry name" value="Schiff_base-form_aldolases_CS"/>
</dbReference>
<dbReference type="NCBIfam" id="TIGR00674">
    <property type="entry name" value="dapA"/>
    <property type="match status" value="1"/>
</dbReference>
<dbReference type="PANTHER" id="PTHR12128:SF66">
    <property type="entry name" value="4-HYDROXY-2-OXOGLUTARATE ALDOLASE, MITOCHONDRIAL"/>
    <property type="match status" value="1"/>
</dbReference>
<dbReference type="PANTHER" id="PTHR12128">
    <property type="entry name" value="DIHYDRODIPICOLINATE SYNTHASE"/>
    <property type="match status" value="1"/>
</dbReference>
<dbReference type="Pfam" id="PF00701">
    <property type="entry name" value="DHDPS"/>
    <property type="match status" value="1"/>
</dbReference>
<dbReference type="PIRSF" id="PIRSF001365">
    <property type="entry name" value="DHDPS"/>
    <property type="match status" value="1"/>
</dbReference>
<dbReference type="PRINTS" id="PR00146">
    <property type="entry name" value="DHPICSNTHASE"/>
</dbReference>
<dbReference type="SMART" id="SM01130">
    <property type="entry name" value="DHDPS"/>
    <property type="match status" value="1"/>
</dbReference>
<dbReference type="SUPFAM" id="SSF51569">
    <property type="entry name" value="Aldolase"/>
    <property type="match status" value="1"/>
</dbReference>
<dbReference type="PROSITE" id="PS00665">
    <property type="entry name" value="DHDPS_1"/>
    <property type="match status" value="1"/>
</dbReference>
<dbReference type="PROSITE" id="PS00666">
    <property type="entry name" value="DHDPS_2"/>
    <property type="match status" value="1"/>
</dbReference>
<proteinExistence type="inferred from homology"/>
<feature type="chain" id="PRO_0000340967" description="4-hydroxy-tetrahydrodipicolinate synthase">
    <location>
        <begin position="1"/>
        <end position="293"/>
    </location>
</feature>
<feature type="active site" description="Proton donor/acceptor" evidence="1">
    <location>
        <position position="133"/>
    </location>
</feature>
<feature type="active site" description="Schiff-base intermediate with substrate" evidence="1">
    <location>
        <position position="162"/>
    </location>
</feature>
<feature type="binding site" evidence="1">
    <location>
        <position position="45"/>
    </location>
    <ligand>
        <name>pyruvate</name>
        <dbReference type="ChEBI" id="CHEBI:15361"/>
    </ligand>
</feature>
<feature type="binding site" evidence="1">
    <location>
        <position position="204"/>
    </location>
    <ligand>
        <name>pyruvate</name>
        <dbReference type="ChEBI" id="CHEBI:15361"/>
    </ligand>
</feature>
<feature type="site" description="Part of a proton relay during catalysis" evidence="1">
    <location>
        <position position="44"/>
    </location>
</feature>
<feature type="site" description="Part of a proton relay during catalysis" evidence="1">
    <location>
        <position position="107"/>
    </location>
</feature>